<organism>
    <name type="scientific">Homo sapiens</name>
    <name type="common">Human</name>
    <dbReference type="NCBI Taxonomy" id="9606"/>
    <lineage>
        <taxon>Eukaryota</taxon>
        <taxon>Metazoa</taxon>
        <taxon>Chordata</taxon>
        <taxon>Craniata</taxon>
        <taxon>Vertebrata</taxon>
        <taxon>Euteleostomi</taxon>
        <taxon>Mammalia</taxon>
        <taxon>Eutheria</taxon>
        <taxon>Euarchontoglires</taxon>
        <taxon>Primates</taxon>
        <taxon>Haplorrhini</taxon>
        <taxon>Catarrhini</taxon>
        <taxon>Hominidae</taxon>
        <taxon>Homo</taxon>
    </lineage>
</organism>
<keyword id="KW-0002">3D-structure</keyword>
<keyword id="KW-0025">Alternative splicing</keyword>
<keyword id="KW-0176">Collagen</keyword>
<keyword id="KW-1015">Disulfide bond</keyword>
<keyword id="KW-0272">Extracellular matrix</keyword>
<keyword id="KW-0325">Glycoprotein</keyword>
<keyword id="KW-0379">Hydroxylation</keyword>
<keyword id="KW-1267">Proteomics identification</keyword>
<keyword id="KW-1185">Reference proteome</keyword>
<keyword id="KW-0677">Repeat</keyword>
<keyword id="KW-0964">Secreted</keyword>
<keyword id="KW-0732">Signal</keyword>
<gene>
    <name type="primary">COL26A1</name>
    <name type="synonym">EMID2</name>
    <name type="synonym">EMU2</name>
</gene>
<name>COQA1_HUMAN</name>
<dbReference type="EMBL" id="AJ416091">
    <property type="protein sequence ID" value="CAC94778.1"/>
    <property type="molecule type" value="mRNA"/>
</dbReference>
<dbReference type="EMBL" id="AC004953">
    <property type="status" value="NOT_ANNOTATED_CDS"/>
    <property type="molecule type" value="Genomic_DNA"/>
</dbReference>
<dbReference type="EMBL" id="AC004965">
    <property type="status" value="NOT_ANNOTATED_CDS"/>
    <property type="molecule type" value="Genomic_DNA"/>
</dbReference>
<dbReference type="EMBL" id="AC006329">
    <property type="status" value="NOT_ANNOTATED_CDS"/>
    <property type="molecule type" value="Genomic_DNA"/>
</dbReference>
<dbReference type="EMBL" id="BC109254">
    <property type="protein sequence ID" value="AAI09255.1"/>
    <property type="molecule type" value="mRNA"/>
</dbReference>
<dbReference type="EMBL" id="BC110393">
    <property type="protein sequence ID" value="AAI10394.1"/>
    <property type="molecule type" value="mRNA"/>
</dbReference>
<dbReference type="CCDS" id="CCDS64739.1">
    <molecule id="Q96A83-1"/>
</dbReference>
<dbReference type="RefSeq" id="NP_001265492.1">
    <molecule id="Q96A83-1"/>
    <property type="nucleotide sequence ID" value="NM_001278563.3"/>
</dbReference>
<dbReference type="RefSeq" id="NP_597714.2">
    <molecule id="Q96A83-2"/>
    <property type="nucleotide sequence ID" value="NM_133457.5"/>
</dbReference>
<dbReference type="RefSeq" id="XP_054213208.1">
    <molecule id="Q96A83-1"/>
    <property type="nucleotide sequence ID" value="XM_054357233.1"/>
</dbReference>
<dbReference type="PDB" id="4AU2">
    <property type="method" value="X-ray"/>
    <property type="resolution" value="2.30 A"/>
    <property type="chains" value="E/F/G/H/I/J=312-325"/>
</dbReference>
<dbReference type="PDB" id="4AU3">
    <property type="method" value="X-ray"/>
    <property type="resolution" value="2.78 A"/>
    <property type="chains" value="E/F/G/H/I/J=309-326"/>
</dbReference>
<dbReference type="PDB" id="4BJ3">
    <property type="method" value="X-ray"/>
    <property type="resolution" value="3.04 A"/>
    <property type="chains" value="C/D/E=308-326"/>
</dbReference>
<dbReference type="PDB" id="7BDU">
    <property type="method" value="X-ray"/>
    <property type="resolution" value="2.49 A"/>
    <property type="chains" value="C/D/E/F/G/H=309-329"/>
</dbReference>
<dbReference type="PDB" id="7BEE">
    <property type="method" value="X-ray"/>
    <property type="resolution" value="1.94 A"/>
    <property type="chains" value="C/D/E/F/G/H=309-329"/>
</dbReference>
<dbReference type="PDB" id="7BFI">
    <property type="method" value="X-ray"/>
    <property type="resolution" value="2.44 A"/>
    <property type="chains" value="E/F/G/H/I/J=312-326"/>
</dbReference>
<dbReference type="PDBsum" id="4AU2"/>
<dbReference type="PDBsum" id="4AU3"/>
<dbReference type="PDBsum" id="4BJ3"/>
<dbReference type="PDBsum" id="7BDU"/>
<dbReference type="PDBsum" id="7BEE"/>
<dbReference type="PDBsum" id="7BFI"/>
<dbReference type="SMR" id="Q96A83"/>
<dbReference type="BioGRID" id="126448">
    <property type="interactions" value="4"/>
</dbReference>
<dbReference type="ComplexPortal" id="CPX-1767">
    <property type="entry name" value="Collagen type XXVI trimer"/>
</dbReference>
<dbReference type="FunCoup" id="Q96A83">
    <property type="interactions" value="215"/>
</dbReference>
<dbReference type="IntAct" id="Q96A83">
    <property type="interactions" value="35"/>
</dbReference>
<dbReference type="STRING" id="9606.ENSP00000318234"/>
<dbReference type="GlyCosmos" id="Q96A83">
    <property type="glycosylation" value="3 sites, 3 glycans"/>
</dbReference>
<dbReference type="GlyGen" id="Q96A83">
    <property type="glycosylation" value="8 sites, 5 N-linked glycans (1 site), 4 O-linked glycans (5 sites)"/>
</dbReference>
<dbReference type="iPTMnet" id="Q96A83"/>
<dbReference type="PhosphoSitePlus" id="Q96A83"/>
<dbReference type="BioMuta" id="COL26A1"/>
<dbReference type="DMDM" id="37537825"/>
<dbReference type="jPOST" id="Q96A83"/>
<dbReference type="MassIVE" id="Q96A83"/>
<dbReference type="PaxDb" id="9606-ENSP00000318234"/>
<dbReference type="PeptideAtlas" id="Q96A83"/>
<dbReference type="ProteomicsDB" id="75933">
    <molecule id="Q96A83-1"/>
</dbReference>
<dbReference type="ProteomicsDB" id="75934">
    <molecule id="Q96A83-2"/>
</dbReference>
<dbReference type="Antibodypedia" id="9137">
    <property type="antibodies" value="160 antibodies from 24 providers"/>
</dbReference>
<dbReference type="DNASU" id="136227"/>
<dbReference type="Ensembl" id="ENST00000313669.12">
    <molecule id="Q96A83-1"/>
    <property type="protein sequence ID" value="ENSP00000318234.8"/>
    <property type="gene ID" value="ENSG00000160963.14"/>
</dbReference>
<dbReference type="Ensembl" id="ENST00000613501.1">
    <molecule id="Q96A83-2"/>
    <property type="protein sequence ID" value="ENSP00000482102.1"/>
    <property type="gene ID" value="ENSG00000160963.14"/>
</dbReference>
<dbReference type="GeneID" id="136227"/>
<dbReference type="KEGG" id="hsa:136227"/>
<dbReference type="MANE-Select" id="ENST00000313669.12">
    <property type="protein sequence ID" value="ENSP00000318234.8"/>
    <property type="RefSeq nucleotide sequence ID" value="NM_001278563.3"/>
    <property type="RefSeq protein sequence ID" value="NP_001265492.1"/>
</dbReference>
<dbReference type="UCSC" id="uc033aas.1">
    <molecule id="Q96A83-1"/>
    <property type="organism name" value="human"/>
</dbReference>
<dbReference type="AGR" id="HGNC:18038"/>
<dbReference type="CTD" id="136227"/>
<dbReference type="DisGeNET" id="136227"/>
<dbReference type="GeneCards" id="COL26A1"/>
<dbReference type="HGNC" id="HGNC:18038">
    <property type="gene designation" value="COL26A1"/>
</dbReference>
<dbReference type="HPA" id="ENSG00000160963">
    <property type="expression patterns" value="Tissue enriched (brain)"/>
</dbReference>
<dbReference type="MalaCards" id="COL26A1"/>
<dbReference type="MIM" id="608927">
    <property type="type" value="gene"/>
</dbReference>
<dbReference type="neXtProt" id="NX_Q96A83"/>
<dbReference type="OpenTargets" id="ENSG00000160963"/>
<dbReference type="PharmGKB" id="PA134887081"/>
<dbReference type="VEuPathDB" id="HostDB:ENSG00000160963"/>
<dbReference type="eggNOG" id="ENOG502R2C0">
    <property type="taxonomic scope" value="Eukaryota"/>
</dbReference>
<dbReference type="GeneTree" id="ENSGT00940000161716"/>
<dbReference type="HOGENOM" id="CLU_045268_1_0_1"/>
<dbReference type="InParanoid" id="Q96A83"/>
<dbReference type="OMA" id="SCCLWGC"/>
<dbReference type="OrthoDB" id="10071545at2759"/>
<dbReference type="PAN-GO" id="Q96A83">
    <property type="GO annotations" value="0 GO annotations based on evolutionary models"/>
</dbReference>
<dbReference type="PhylomeDB" id="Q96A83"/>
<dbReference type="PathwayCommons" id="Q96A83"/>
<dbReference type="Reactome" id="R-HSA-1442490">
    <property type="pathway name" value="Collagen degradation"/>
</dbReference>
<dbReference type="Reactome" id="R-HSA-1650814">
    <property type="pathway name" value="Collagen biosynthesis and modifying enzymes"/>
</dbReference>
<dbReference type="Reactome" id="R-HSA-8948216">
    <property type="pathway name" value="Collagen chain trimerization"/>
</dbReference>
<dbReference type="SignaLink" id="Q96A83"/>
<dbReference type="BioGRID-ORCS" id="136227">
    <property type="hits" value="4 hits in 603 CRISPR screens"/>
</dbReference>
<dbReference type="ChiTaRS" id="COL26A1">
    <property type="organism name" value="human"/>
</dbReference>
<dbReference type="EvolutionaryTrace" id="Q96A83"/>
<dbReference type="GeneWiki" id="EMID2"/>
<dbReference type="GenomeRNAi" id="136227"/>
<dbReference type="Pharos" id="Q96A83">
    <property type="development level" value="Tbio"/>
</dbReference>
<dbReference type="PRO" id="PR:Q96A83"/>
<dbReference type="Proteomes" id="UP000005640">
    <property type="component" value="Chromosome 7"/>
</dbReference>
<dbReference type="RNAct" id="Q96A83">
    <property type="molecule type" value="protein"/>
</dbReference>
<dbReference type="Bgee" id="ENSG00000160963">
    <property type="expression patterns" value="Expressed in vena cava and 143 other cell types or tissues"/>
</dbReference>
<dbReference type="GO" id="GO:1990324">
    <property type="term" value="C:collagen type XXVI trimer"/>
    <property type="evidence" value="ECO:0000303"/>
    <property type="project" value="ComplexPortal"/>
</dbReference>
<dbReference type="GO" id="GO:0062023">
    <property type="term" value="C:collagen-containing extracellular matrix"/>
    <property type="evidence" value="ECO:0007005"/>
    <property type="project" value="UniProtKB"/>
</dbReference>
<dbReference type="GO" id="GO:0005788">
    <property type="term" value="C:endoplasmic reticulum lumen"/>
    <property type="evidence" value="ECO:0000304"/>
    <property type="project" value="Reactome"/>
</dbReference>
<dbReference type="GO" id="GO:0005576">
    <property type="term" value="C:extracellular region"/>
    <property type="evidence" value="ECO:0000304"/>
    <property type="project" value="Reactome"/>
</dbReference>
<dbReference type="GO" id="GO:0005794">
    <property type="term" value="C:Golgi apparatus"/>
    <property type="evidence" value="ECO:0007669"/>
    <property type="project" value="Ensembl"/>
</dbReference>
<dbReference type="GO" id="GO:0005886">
    <property type="term" value="C:plasma membrane"/>
    <property type="evidence" value="ECO:0000304"/>
    <property type="project" value="Reactome"/>
</dbReference>
<dbReference type="GO" id="GO:0010811">
    <property type="term" value="P:positive regulation of cell-substrate adhesion"/>
    <property type="evidence" value="ECO:0007669"/>
    <property type="project" value="Ensembl"/>
</dbReference>
<dbReference type="InterPro" id="IPR008160">
    <property type="entry name" value="Collagen"/>
</dbReference>
<dbReference type="InterPro" id="IPR050392">
    <property type="entry name" value="Collagen/C1q_domain"/>
</dbReference>
<dbReference type="InterPro" id="IPR011489">
    <property type="entry name" value="EMI_domain"/>
</dbReference>
<dbReference type="PANTHER" id="PTHR15427:SF19">
    <property type="entry name" value="COLLAGEN ALPHA-1(XXVI) CHAIN"/>
    <property type="match status" value="1"/>
</dbReference>
<dbReference type="PANTHER" id="PTHR15427">
    <property type="entry name" value="EMILIN ELASTIN MICROFIBRIL INTERFACE-LOCATED PROTEIN ELASTIN MICROFIBRIL INTERFACER"/>
    <property type="match status" value="1"/>
</dbReference>
<dbReference type="Pfam" id="PF01391">
    <property type="entry name" value="Collagen"/>
    <property type="match status" value="2"/>
</dbReference>
<dbReference type="Pfam" id="PF07546">
    <property type="entry name" value="EMI"/>
    <property type="match status" value="1"/>
</dbReference>
<dbReference type="PROSITE" id="PS51041">
    <property type="entry name" value="EMI"/>
    <property type="match status" value="1"/>
</dbReference>
<feature type="signal peptide" evidence="2">
    <location>
        <begin position="1"/>
        <end position="20"/>
    </location>
</feature>
<feature type="chain" id="PRO_0000007825" description="Collagen alpha-1(XXVI) chain">
    <location>
        <begin position="21"/>
        <end position="441"/>
    </location>
</feature>
<feature type="domain" description="EMI" evidence="3">
    <location>
        <begin position="52"/>
        <end position="128"/>
    </location>
</feature>
<feature type="domain" description="Collagen-like 1">
    <location>
        <begin position="199"/>
        <end position="267"/>
    </location>
</feature>
<feature type="domain" description="Collagen-like 2">
    <location>
        <begin position="302"/>
        <end position="355"/>
    </location>
</feature>
<feature type="region of interest" description="Disordered" evidence="4">
    <location>
        <begin position="156"/>
        <end position="362"/>
    </location>
</feature>
<feature type="region of interest" description="Disordered" evidence="4">
    <location>
        <begin position="390"/>
        <end position="441"/>
    </location>
</feature>
<feature type="compositionally biased region" description="Pro residues" evidence="4">
    <location>
        <begin position="200"/>
        <end position="215"/>
    </location>
</feature>
<feature type="compositionally biased region" description="Pro residues" evidence="4">
    <location>
        <begin position="231"/>
        <end position="243"/>
    </location>
</feature>
<feature type="compositionally biased region" description="Pro residues" evidence="4">
    <location>
        <begin position="252"/>
        <end position="269"/>
    </location>
</feature>
<feature type="compositionally biased region" description="Pro residues" evidence="4">
    <location>
        <begin position="306"/>
        <end position="327"/>
    </location>
</feature>
<feature type="compositionally biased region" description="Basic and acidic residues" evidence="4">
    <location>
        <begin position="348"/>
        <end position="357"/>
    </location>
</feature>
<feature type="glycosylation site" description="N-linked (GlcNAc...) asparagine" evidence="2">
    <location>
        <position position="70"/>
    </location>
</feature>
<feature type="glycosylation site" description="N-linked (GlcNAc...) asparagine" evidence="2">
    <location>
        <position position="132"/>
    </location>
</feature>
<feature type="disulfide bond" evidence="3">
    <location>
        <begin position="56"/>
        <end position="118"/>
    </location>
</feature>
<feature type="disulfide bond" evidence="3">
    <location>
        <begin position="83"/>
        <end position="89"/>
    </location>
</feature>
<feature type="disulfide bond" evidence="3">
    <location>
        <begin position="117"/>
        <end position="126"/>
    </location>
</feature>
<feature type="splice variant" id="VSP_008447" description="In isoform 2." evidence="5 6">
    <location>
        <begin position="94"/>
        <end position="95"/>
    </location>
</feature>
<feature type="sequence variant" id="VAR_057530" description="In dbSNP:rs17471501.">
    <original>P</original>
    <variation>L</variation>
    <location>
        <position position="427"/>
    </location>
</feature>
<proteinExistence type="evidence at protein level"/>
<comment type="subunit">
    <text evidence="1">Homotrimer or heterotrimer.</text>
</comment>
<comment type="interaction">
    <interactant intactId="EBI-21553822">
        <id>Q96A83-2</id>
    </interactant>
    <interactant intactId="EBI-11893530">
        <id>Q9NP70</id>
        <label>AMBN</label>
    </interactant>
    <organismsDiffer>false</organismsDiffer>
    <experiments>3</experiments>
</comment>
<comment type="interaction">
    <interactant intactId="EBI-21553822">
        <id>Q96A83-2</id>
    </interactant>
    <interactant intactId="EBI-2556915">
        <id>P13928</id>
        <label>ANXA8</label>
    </interactant>
    <organismsDiffer>false</organismsDiffer>
    <experiments>3</experiments>
</comment>
<comment type="interaction">
    <interactant intactId="EBI-21553822">
        <id>Q96A83-2</id>
    </interactant>
    <interactant intactId="EBI-77613">
        <id>P05067</id>
        <label>APP</label>
    </interactant>
    <organismsDiffer>false</organismsDiffer>
    <experiments>3</experiments>
</comment>
<comment type="interaction">
    <interactant intactId="EBI-21553822">
        <id>Q96A83-2</id>
    </interactant>
    <interactant intactId="EBI-742750">
        <id>Q8TBE0</id>
        <label>BAHD1</label>
    </interactant>
    <organismsDiffer>false</organismsDiffer>
    <experiments>3</experiments>
</comment>
<comment type="interaction">
    <interactant intactId="EBI-21553822">
        <id>Q96A83-2</id>
    </interactant>
    <interactant intactId="EBI-949378">
        <id>Q14457</id>
        <label>BECN1</label>
    </interactant>
    <organismsDiffer>false</organismsDiffer>
    <experiments>3</experiments>
</comment>
<comment type="interaction">
    <interactant intactId="EBI-21553822">
        <id>Q96A83-2</id>
    </interactant>
    <interactant intactId="EBI-2510250">
        <id>Q96SW2</id>
        <label>CRBN</label>
    </interactant>
    <organismsDiffer>false</organismsDiffer>
    <experiments>3</experiments>
</comment>
<comment type="interaction">
    <interactant intactId="EBI-21553822">
        <id>Q96A83-2</id>
    </interactant>
    <interactant intactId="EBI-21529239">
        <id>Q86TI2-2</id>
        <label>DPP9</label>
    </interactant>
    <organismsDiffer>false</organismsDiffer>
    <experiments>3</experiments>
</comment>
<comment type="interaction">
    <interactant intactId="EBI-21553822">
        <id>Q96A83-2</id>
    </interactant>
    <interactant intactId="EBI-1001144">
        <id>Q9H410</id>
        <label>DSN1</label>
    </interactant>
    <organismsDiffer>false</organismsDiffer>
    <experiments>3</experiments>
</comment>
<comment type="interaction">
    <interactant intactId="EBI-21553822">
        <id>Q96A83-2</id>
    </interactant>
    <interactant intactId="EBI-1045879">
        <id>Q8WVX9</id>
        <label>FAR1</label>
    </interactant>
    <organismsDiffer>false</organismsDiffer>
    <experiments>3</experiments>
</comment>
<comment type="interaction">
    <interactant intactId="EBI-21553822">
        <id>Q96A83-2</id>
    </interactant>
    <interactant intactId="EBI-750641">
        <id>Q5TD97</id>
        <label>FHL5</label>
    </interactant>
    <organismsDiffer>false</organismsDiffer>
    <experiments>3</experiments>
</comment>
<comment type="interaction">
    <interactant intactId="EBI-21553822">
        <id>Q96A83-2</id>
    </interactant>
    <interactant intactId="EBI-9088619">
        <id>Q06547-3</id>
        <label>GABPB1</label>
    </interactant>
    <organismsDiffer>false</organismsDiffer>
    <experiments>3</experiments>
</comment>
<comment type="interaction">
    <interactant intactId="EBI-21553822">
        <id>Q96A83-2</id>
    </interactant>
    <interactant intactId="EBI-2868501">
        <id>Q6NXT2</id>
        <label>H3-5</label>
    </interactant>
    <organismsDiffer>false</organismsDiffer>
    <experiments>3</experiments>
</comment>
<comment type="interaction">
    <interactant intactId="EBI-21553822">
        <id>Q96A83-2</id>
    </interactant>
    <interactant intactId="EBI-17178971">
        <id>Q14005-2</id>
        <label>IL16</label>
    </interactant>
    <organismsDiffer>false</organismsDiffer>
    <experiments>3</experiments>
</comment>
<comment type="interaction">
    <interactant intactId="EBI-21553822">
        <id>Q96A83-2</id>
    </interactant>
    <interactant intactId="EBI-6509505">
        <id>Q0VD86</id>
        <label>INCA1</label>
    </interactant>
    <organismsDiffer>false</organismsDiffer>
    <experiments>3</experiments>
</comment>
<comment type="interaction">
    <interactant intactId="EBI-21553822">
        <id>Q96A83-2</id>
    </interactant>
    <interactant intactId="EBI-10220600">
        <id>Q8NA54</id>
        <label>IQUB</label>
    </interactant>
    <organismsDiffer>false</organismsDiffer>
    <experiments>3</experiments>
</comment>
<comment type="interaction">
    <interactant intactId="EBI-21553822">
        <id>Q96A83-2</id>
    </interactant>
    <interactant intactId="EBI-2796400">
        <id>Q9UIH9</id>
        <label>KLF15</label>
    </interactant>
    <organismsDiffer>false</organismsDiffer>
    <experiments>3</experiments>
</comment>
<comment type="interaction">
    <interactant intactId="EBI-21553822">
        <id>Q96A83-2</id>
    </interactant>
    <interactant intactId="EBI-2696013">
        <id>Q13887</id>
        <label>KLF5</label>
    </interactant>
    <organismsDiffer>false</organismsDiffer>
    <experiments>3</experiments>
</comment>
<comment type="interaction">
    <interactant intactId="EBI-21553822">
        <id>Q96A83-2</id>
    </interactant>
    <interactant intactId="EBI-2350424">
        <id>Q9BV99</id>
        <label>LRRC61</label>
    </interactant>
    <organismsDiffer>false</organismsDiffer>
    <experiments>3</experiments>
</comment>
<comment type="interaction">
    <interactant intactId="EBI-21553822">
        <id>Q96A83-2</id>
    </interactant>
    <interactant intactId="EBI-996616">
        <id>P02795</id>
        <label>MT2A</label>
    </interactant>
    <organismsDiffer>false</organismsDiffer>
    <experiments>3</experiments>
</comment>
<comment type="interaction">
    <interactant intactId="EBI-21553822">
        <id>Q96A83-2</id>
    </interactant>
    <interactant intactId="EBI-12386584">
        <id>P22061-2</id>
        <label>PCMT1</label>
    </interactant>
    <organismsDiffer>false</organismsDiffer>
    <experiments>3</experiments>
</comment>
<comment type="interaction">
    <interactant intactId="EBI-21553822">
        <id>Q96A83-2</id>
    </interactant>
    <interactant intactId="EBI-11527347">
        <id>Q8IXK0-5</id>
        <label>PHC2</label>
    </interactant>
    <organismsDiffer>false</organismsDiffer>
    <experiments>3</experiments>
</comment>
<comment type="interaction">
    <interactant intactId="EBI-21553822">
        <id>Q96A83-2</id>
    </interactant>
    <interactant intactId="EBI-11522811">
        <id>Q8IUQ4-2</id>
        <label>SIAH1</label>
    </interactant>
    <organismsDiffer>false</organismsDiffer>
    <experiments>3</experiments>
</comment>
<comment type="interaction">
    <interactant intactId="EBI-21553822">
        <id>Q96A83-2</id>
    </interactant>
    <interactant intactId="EBI-358489">
        <id>Q96GM5</id>
        <label>SMARCD1</label>
    </interactant>
    <organismsDiffer>false</organismsDiffer>
    <experiments>3</experiments>
</comment>
<comment type="interaction">
    <interactant intactId="EBI-21553822">
        <id>Q96A83-2</id>
    </interactant>
    <interactant intactId="EBI-373258">
        <id>O75886</id>
        <label>STAM2</label>
    </interactant>
    <organismsDiffer>false</organismsDiffer>
    <experiments>3</experiments>
</comment>
<comment type="interaction">
    <interactant intactId="EBI-21553822">
        <id>Q96A83-2</id>
    </interactant>
    <interactant intactId="EBI-714135">
        <id>O75558</id>
        <label>STX11</label>
    </interactant>
    <organismsDiffer>false</organismsDiffer>
    <experiments>3</experiments>
</comment>
<comment type="interaction">
    <interactant intactId="EBI-21553822">
        <id>Q96A83-2</id>
    </interactant>
    <interactant intactId="EBI-12806590">
        <id>Q86WV8</id>
        <label>TSC1</label>
    </interactant>
    <organismsDiffer>false</organismsDiffer>
    <experiments>3</experiments>
</comment>
<comment type="interaction">
    <interactant intactId="EBI-21553822">
        <id>Q96A83-2</id>
    </interactant>
    <interactant intactId="EBI-8656864">
        <id>Q6PF05</id>
        <label>TTC23L</label>
    </interactant>
    <organismsDiffer>false</organismsDiffer>
    <experiments>3</experiments>
</comment>
<comment type="interaction">
    <interactant intactId="EBI-21553822">
        <id>Q96A83-2</id>
    </interactant>
    <interactant intactId="EBI-2555404">
        <id>Q6PID6</id>
        <label>TTC33</label>
    </interactant>
    <organismsDiffer>false</organismsDiffer>
    <experiments>3</experiments>
</comment>
<comment type="interaction">
    <interactant intactId="EBI-21553822">
        <id>Q96A83-2</id>
    </interactant>
    <interactant intactId="EBI-7705033">
        <id>Q9BRX9</id>
        <label>WDR83</label>
    </interactant>
    <organismsDiffer>false</organismsDiffer>
    <experiments>3</experiments>
</comment>
<comment type="interaction">
    <interactant intactId="EBI-21553822">
        <id>Q96A83-2</id>
    </interactant>
    <interactant intactId="EBI-10693326">
        <id>Q9H4I2-2</id>
        <label>ZHX3</label>
    </interactant>
    <organismsDiffer>false</organismsDiffer>
    <experiments>3</experiments>
</comment>
<comment type="interaction">
    <interactant intactId="EBI-21553822">
        <id>Q96A83-2</id>
    </interactant>
    <interactant intactId="EBI-25831733">
        <id>Q96MN9-2</id>
        <label>ZNF488</label>
    </interactant>
    <organismsDiffer>false</organismsDiffer>
    <experiments>3</experiments>
</comment>
<comment type="subcellular location">
    <subcellularLocation>
        <location>Secreted</location>
        <location>Extracellular space</location>
        <location>Extracellular matrix</location>
    </subcellularLocation>
</comment>
<comment type="alternative products">
    <event type="alternative splicing"/>
    <isoform>
        <id>Q96A83-1</id>
        <name>1</name>
        <sequence type="displayed"/>
    </isoform>
    <isoform>
        <id>Q96A83-2</id>
        <name>2</name>
        <sequence type="described" ref="VSP_008447"/>
    </isoform>
</comment>
<comment type="PTM">
    <text evidence="1">Hydroxylated on proline residues.</text>
</comment>
<comment type="miscellaneous">
    <molecule>Isoform 2</molecule>
    <text evidence="7">May be due to a competing acceptor splice site.</text>
</comment>
<protein>
    <recommendedName>
        <fullName>Collagen alpha-1(XXVI) chain</fullName>
    </recommendedName>
    <alternativeName>
        <fullName>Alpha-1 type XXVI collagen</fullName>
    </alternativeName>
    <alternativeName>
        <fullName>EMI domain-containing protein 2</fullName>
    </alternativeName>
    <alternativeName>
        <fullName>Emilin and multimerin domain-containing protein 2</fullName>
        <shortName>Emu2</shortName>
    </alternativeName>
</protein>
<reference key="1">
    <citation type="journal article" date="2002" name="Dev. Biol.">
        <title>Developmental expression and biochemical characterization of Emu family members.</title>
        <authorList>
            <person name="Leimeister C."/>
            <person name="Steidl C."/>
            <person name="Schumacher N."/>
            <person name="Erhard S."/>
            <person name="Gessler M."/>
        </authorList>
    </citation>
    <scope>NUCLEOTIDE SEQUENCE [MRNA] (ISOFORMS 1 AND 2)</scope>
</reference>
<reference key="2">
    <citation type="journal article" date="2003" name="Nature">
        <title>The DNA sequence of human chromosome 7.</title>
        <authorList>
            <person name="Hillier L.W."/>
            <person name="Fulton R.S."/>
            <person name="Fulton L.A."/>
            <person name="Graves T.A."/>
            <person name="Pepin K.H."/>
            <person name="Wagner-McPherson C."/>
            <person name="Layman D."/>
            <person name="Maas J."/>
            <person name="Jaeger S."/>
            <person name="Walker R."/>
            <person name="Wylie K."/>
            <person name="Sekhon M."/>
            <person name="Becker M.C."/>
            <person name="O'Laughlin M.D."/>
            <person name="Schaller M.E."/>
            <person name="Fewell G.A."/>
            <person name="Delehaunty K.D."/>
            <person name="Miner T.L."/>
            <person name="Nash W.E."/>
            <person name="Cordes M."/>
            <person name="Du H."/>
            <person name="Sun H."/>
            <person name="Edwards J."/>
            <person name="Bradshaw-Cordum H."/>
            <person name="Ali J."/>
            <person name="Andrews S."/>
            <person name="Isak A."/>
            <person name="Vanbrunt A."/>
            <person name="Nguyen C."/>
            <person name="Du F."/>
            <person name="Lamar B."/>
            <person name="Courtney L."/>
            <person name="Kalicki J."/>
            <person name="Ozersky P."/>
            <person name="Bielicki L."/>
            <person name="Scott K."/>
            <person name="Holmes A."/>
            <person name="Harkins R."/>
            <person name="Harris A."/>
            <person name="Strong C.M."/>
            <person name="Hou S."/>
            <person name="Tomlinson C."/>
            <person name="Dauphin-Kohlberg S."/>
            <person name="Kozlowicz-Reilly A."/>
            <person name="Leonard S."/>
            <person name="Rohlfing T."/>
            <person name="Rock S.M."/>
            <person name="Tin-Wollam A.-M."/>
            <person name="Abbott A."/>
            <person name="Minx P."/>
            <person name="Maupin R."/>
            <person name="Strowmatt C."/>
            <person name="Latreille P."/>
            <person name="Miller N."/>
            <person name="Johnson D."/>
            <person name="Murray J."/>
            <person name="Woessner J.P."/>
            <person name="Wendl M.C."/>
            <person name="Yang S.-P."/>
            <person name="Schultz B.R."/>
            <person name="Wallis J.W."/>
            <person name="Spieth J."/>
            <person name="Bieri T.A."/>
            <person name="Nelson J.O."/>
            <person name="Berkowicz N."/>
            <person name="Wohldmann P.E."/>
            <person name="Cook L.L."/>
            <person name="Hickenbotham M.T."/>
            <person name="Eldred J."/>
            <person name="Williams D."/>
            <person name="Bedell J.A."/>
            <person name="Mardis E.R."/>
            <person name="Clifton S.W."/>
            <person name="Chissoe S.L."/>
            <person name="Marra M.A."/>
            <person name="Raymond C."/>
            <person name="Haugen E."/>
            <person name="Gillett W."/>
            <person name="Zhou Y."/>
            <person name="James R."/>
            <person name="Phelps K."/>
            <person name="Iadanoto S."/>
            <person name="Bubb K."/>
            <person name="Simms E."/>
            <person name="Levy R."/>
            <person name="Clendenning J."/>
            <person name="Kaul R."/>
            <person name="Kent W.J."/>
            <person name="Furey T.S."/>
            <person name="Baertsch R.A."/>
            <person name="Brent M.R."/>
            <person name="Keibler E."/>
            <person name="Flicek P."/>
            <person name="Bork P."/>
            <person name="Suyama M."/>
            <person name="Bailey J.A."/>
            <person name="Portnoy M.E."/>
            <person name="Torrents D."/>
            <person name="Chinwalla A.T."/>
            <person name="Gish W.R."/>
            <person name="Eddy S.R."/>
            <person name="McPherson J.D."/>
            <person name="Olson M.V."/>
            <person name="Eichler E.E."/>
            <person name="Green E.D."/>
            <person name="Waterston R.H."/>
            <person name="Wilson R.K."/>
        </authorList>
    </citation>
    <scope>NUCLEOTIDE SEQUENCE [LARGE SCALE GENOMIC DNA]</scope>
</reference>
<reference key="3">
    <citation type="journal article" date="2004" name="Genome Res.">
        <title>The status, quality, and expansion of the NIH full-length cDNA project: the Mammalian Gene Collection (MGC).</title>
        <authorList>
            <consortium name="The MGC Project Team"/>
        </authorList>
    </citation>
    <scope>NUCLEOTIDE SEQUENCE [LARGE SCALE MRNA] (ISOFORM 2)</scope>
</reference>
<evidence type="ECO:0000250" key="1"/>
<evidence type="ECO:0000255" key="2"/>
<evidence type="ECO:0000255" key="3">
    <source>
        <dbReference type="PROSITE-ProRule" id="PRU00384"/>
    </source>
</evidence>
<evidence type="ECO:0000256" key="4">
    <source>
        <dbReference type="SAM" id="MobiDB-lite"/>
    </source>
</evidence>
<evidence type="ECO:0000303" key="5">
    <source>
    </source>
</evidence>
<evidence type="ECO:0000303" key="6">
    <source>
    </source>
</evidence>
<evidence type="ECO:0000305" key="7"/>
<accession>Q96A83</accession>
<accession>Q32M90</accession>
<sequence>MKLALLLPWACCCLCGSALATGFLYPFSAAALQQHGYPEPGAGSPGSGYASRRHWCHHTVTRTVSCQVQNGSETVVQRVYQSCRWPGPCANLVSYRTLIRPTYRVSYRTVTVLEWRCCPGFTGSNCDEECMNCTRLSDMSERLTTLEAKVLLLEAAERPSSPDNDLPAPESTPPTWNEDFLPDAIPLAHPVPRQRRPTGPAGPPGQTGPPGPAGPPGSKGDRGQTGEKGPAGPPGLLGPPGPRGLPGEMGRPGPPGPPGPAGNPGPSPNSPQGALYSLQPPTDKDNGDSRLASAIVDTVLAGVPGPRGPPGPPGPPGPRGPPGPPGTPGSQGLAGERGTVGPSGEPGVKGEEGEKAATAEGEGVQQLREALKILAERVLILEHMIGIHDPLASPEGGSGQDAALRANLKMKRGGAQPDGVLAALLGPDPGQKSVDQASSRK</sequence>